<name>RPOZ_ACIBS</name>
<comment type="function">
    <text evidence="1">Promotes RNA polymerase assembly. Latches the N- and C-terminal regions of the beta' subunit thereby facilitating its interaction with the beta and alpha subunits.</text>
</comment>
<comment type="catalytic activity">
    <reaction evidence="1">
        <text>RNA(n) + a ribonucleoside 5'-triphosphate = RNA(n+1) + diphosphate</text>
        <dbReference type="Rhea" id="RHEA:21248"/>
        <dbReference type="Rhea" id="RHEA-COMP:14527"/>
        <dbReference type="Rhea" id="RHEA-COMP:17342"/>
        <dbReference type="ChEBI" id="CHEBI:33019"/>
        <dbReference type="ChEBI" id="CHEBI:61557"/>
        <dbReference type="ChEBI" id="CHEBI:140395"/>
        <dbReference type="EC" id="2.7.7.6"/>
    </reaction>
</comment>
<comment type="subunit">
    <text evidence="1">The RNAP catalytic core consists of 2 alpha, 1 beta, 1 beta' and 1 omega subunit. When a sigma factor is associated with the core the holoenzyme is formed, which can initiate transcription.</text>
</comment>
<comment type="similarity">
    <text evidence="1">Belongs to the RNA polymerase subunit omega family.</text>
</comment>
<proteinExistence type="inferred from homology"/>
<sequence length="92" mass="10445">MARVTVEDCLDHVDNRFELVLVASKRARQLARQGMEPTVEWDNDKPTVVALREIAVGHVTKEILKQREQDYQTSSLDLALSTNSLNLEGFSF</sequence>
<keyword id="KW-0240">DNA-directed RNA polymerase</keyword>
<keyword id="KW-0548">Nucleotidyltransferase</keyword>
<keyword id="KW-0804">Transcription</keyword>
<keyword id="KW-0808">Transferase</keyword>
<dbReference type="EC" id="2.7.7.6" evidence="1"/>
<dbReference type="EMBL" id="CU468230">
    <property type="protein sequence ID" value="CAO99715.1"/>
    <property type="molecule type" value="Genomic_DNA"/>
</dbReference>
<dbReference type="SMR" id="B0VQ51"/>
<dbReference type="KEGG" id="abm:ABSDF0321"/>
<dbReference type="HOGENOM" id="CLU_125406_5_3_6"/>
<dbReference type="Proteomes" id="UP000001741">
    <property type="component" value="Chromosome"/>
</dbReference>
<dbReference type="GO" id="GO:0000428">
    <property type="term" value="C:DNA-directed RNA polymerase complex"/>
    <property type="evidence" value="ECO:0007669"/>
    <property type="project" value="UniProtKB-KW"/>
</dbReference>
<dbReference type="GO" id="GO:0003677">
    <property type="term" value="F:DNA binding"/>
    <property type="evidence" value="ECO:0007669"/>
    <property type="project" value="UniProtKB-UniRule"/>
</dbReference>
<dbReference type="GO" id="GO:0003899">
    <property type="term" value="F:DNA-directed RNA polymerase activity"/>
    <property type="evidence" value="ECO:0007669"/>
    <property type="project" value="UniProtKB-UniRule"/>
</dbReference>
<dbReference type="GO" id="GO:0006351">
    <property type="term" value="P:DNA-templated transcription"/>
    <property type="evidence" value="ECO:0007669"/>
    <property type="project" value="UniProtKB-UniRule"/>
</dbReference>
<dbReference type="Gene3D" id="3.90.940.10">
    <property type="match status" value="1"/>
</dbReference>
<dbReference type="HAMAP" id="MF_00366">
    <property type="entry name" value="RNApol_bact_RpoZ"/>
    <property type="match status" value="1"/>
</dbReference>
<dbReference type="InterPro" id="IPR003716">
    <property type="entry name" value="DNA-dir_RNA_pol_omega"/>
</dbReference>
<dbReference type="InterPro" id="IPR006110">
    <property type="entry name" value="Pol_omega/Rpo6/RPB6"/>
</dbReference>
<dbReference type="InterPro" id="IPR036161">
    <property type="entry name" value="RPB6/omega-like_sf"/>
</dbReference>
<dbReference type="NCBIfam" id="TIGR00690">
    <property type="entry name" value="rpoZ"/>
    <property type="match status" value="1"/>
</dbReference>
<dbReference type="PANTHER" id="PTHR34476">
    <property type="entry name" value="DNA-DIRECTED RNA POLYMERASE SUBUNIT OMEGA"/>
    <property type="match status" value="1"/>
</dbReference>
<dbReference type="PANTHER" id="PTHR34476:SF1">
    <property type="entry name" value="DNA-DIRECTED RNA POLYMERASE SUBUNIT OMEGA"/>
    <property type="match status" value="1"/>
</dbReference>
<dbReference type="Pfam" id="PF01192">
    <property type="entry name" value="RNA_pol_Rpb6"/>
    <property type="match status" value="1"/>
</dbReference>
<dbReference type="SMART" id="SM01409">
    <property type="entry name" value="RNA_pol_Rpb6"/>
    <property type="match status" value="1"/>
</dbReference>
<dbReference type="SUPFAM" id="SSF63562">
    <property type="entry name" value="RPB6/omega subunit-like"/>
    <property type="match status" value="1"/>
</dbReference>
<reference key="1">
    <citation type="journal article" date="2008" name="PLoS ONE">
        <title>Comparative analysis of Acinetobacters: three genomes for three lifestyles.</title>
        <authorList>
            <person name="Vallenet D."/>
            <person name="Nordmann P."/>
            <person name="Barbe V."/>
            <person name="Poirel L."/>
            <person name="Mangenot S."/>
            <person name="Bataille E."/>
            <person name="Dossat C."/>
            <person name="Gas S."/>
            <person name="Kreimeyer A."/>
            <person name="Lenoble P."/>
            <person name="Oztas S."/>
            <person name="Poulain J."/>
            <person name="Segurens B."/>
            <person name="Robert C."/>
            <person name="Abergel C."/>
            <person name="Claverie J.-M."/>
            <person name="Raoult D."/>
            <person name="Medigue C."/>
            <person name="Weissenbach J."/>
            <person name="Cruveiller S."/>
        </authorList>
    </citation>
    <scope>NUCLEOTIDE SEQUENCE [LARGE SCALE GENOMIC DNA]</scope>
    <source>
        <strain>SDF</strain>
    </source>
</reference>
<evidence type="ECO:0000255" key="1">
    <source>
        <dbReference type="HAMAP-Rule" id="MF_00366"/>
    </source>
</evidence>
<accession>B0VQ51</accession>
<gene>
    <name evidence="1" type="primary">rpoZ</name>
    <name type="ordered locus">ABSDF0321</name>
</gene>
<organism>
    <name type="scientific">Acinetobacter baumannii (strain SDF)</name>
    <dbReference type="NCBI Taxonomy" id="509170"/>
    <lineage>
        <taxon>Bacteria</taxon>
        <taxon>Pseudomonadati</taxon>
        <taxon>Pseudomonadota</taxon>
        <taxon>Gammaproteobacteria</taxon>
        <taxon>Moraxellales</taxon>
        <taxon>Moraxellaceae</taxon>
        <taxon>Acinetobacter</taxon>
        <taxon>Acinetobacter calcoaceticus/baumannii complex</taxon>
    </lineage>
</organism>
<feature type="chain" id="PRO_1000121177" description="DNA-directed RNA polymerase subunit omega">
    <location>
        <begin position="1"/>
        <end position="92"/>
    </location>
</feature>
<protein>
    <recommendedName>
        <fullName evidence="1">DNA-directed RNA polymerase subunit omega</fullName>
        <shortName evidence="1">RNAP omega subunit</shortName>
        <ecNumber evidence="1">2.7.7.6</ecNumber>
    </recommendedName>
    <alternativeName>
        <fullName evidence="1">RNA polymerase omega subunit</fullName>
    </alternativeName>
    <alternativeName>
        <fullName evidence="1">Transcriptase subunit omega</fullName>
    </alternativeName>
</protein>